<sequence length="560" mass="63245">MKVWMAILISILCWQSSVWAVCPAWSPARAQEEISRLQQQIKQWDDDYWKEGKSEVEDGVYDQLSARLTQWQRCFVSEPRDVMMPPLNGAVMHPVAHTGVRKMADKNALSLWMRERSDLWVQPKVDGVAVTLVYRDGKLNKAISRGNGLKGEDWTQKVSLISAVPQTVSGPLANSTLQGEIFLQREGHIQQQMGGINARAKVAGLMMRQGNSDTLNSLAVFVWAWPDGPQLMTDRLKELATAGFTLTQRYTRAVKNADEVARVRNEWWKAKLPFVTDGVVVRGAKEPESRHWLPGQAEWLVAWKYQPVAQVAEVKAIQFAVGKSGKISVVASLAPVMLDDKKVQRVNIGSVRRWQEWDIAPGDQILVSLAGQGIPRIDDVVWRGAERTKPTPPENRFNPLTCYFASDVCQEQFISRLVWLGSKQVLGLDGIGEAGWRALHQTHRFEHIFSWLLLTPEQLQNTPGIAKSKSAQLWHQFNLARNQPFTRWVMAMGIPLTRAALNASDERSWSQLLFSTEQFWQQLPGTGSGRARQVIEWKENAQIKKLGSWLAAQQITGFEP</sequence>
<evidence type="ECO:0000255" key="1">
    <source>
        <dbReference type="HAMAP-Rule" id="MF_01587"/>
    </source>
</evidence>
<evidence type="ECO:0000305" key="2"/>
<name>LIGB_SHIF8</name>
<reference key="1">
    <citation type="journal article" date="2006" name="BMC Genomics">
        <title>Complete genome sequence of Shigella flexneri 5b and comparison with Shigella flexneri 2a.</title>
        <authorList>
            <person name="Nie H."/>
            <person name="Yang F."/>
            <person name="Zhang X."/>
            <person name="Yang J."/>
            <person name="Chen L."/>
            <person name="Wang J."/>
            <person name="Xiong Z."/>
            <person name="Peng J."/>
            <person name="Sun L."/>
            <person name="Dong J."/>
            <person name="Xue Y."/>
            <person name="Xu X."/>
            <person name="Chen S."/>
            <person name="Yao Z."/>
            <person name="Shen Y."/>
            <person name="Jin Q."/>
        </authorList>
    </citation>
    <scope>NUCLEOTIDE SEQUENCE [LARGE SCALE GENOMIC DNA]</scope>
    <source>
        <strain>8401</strain>
    </source>
</reference>
<keyword id="KW-0227">DNA damage</keyword>
<keyword id="KW-0234">DNA repair</keyword>
<keyword id="KW-0235">DNA replication</keyword>
<keyword id="KW-0436">Ligase</keyword>
<keyword id="KW-0520">NAD</keyword>
<accession>Q0SYH4</accession>
<comment type="function">
    <text evidence="1">Catalyzes the formation of phosphodiester linkages between 5'-phosphoryl and 3'-hydroxyl groups in double-stranded DNA using NAD as a coenzyme and as the energy source for the reaction.</text>
</comment>
<comment type="catalytic activity">
    <reaction evidence="1">
        <text>NAD(+) + (deoxyribonucleotide)n-3'-hydroxyl + 5'-phospho-(deoxyribonucleotide)m = (deoxyribonucleotide)n+m + AMP + beta-nicotinamide D-nucleotide.</text>
        <dbReference type="EC" id="6.5.1.2"/>
    </reaction>
</comment>
<comment type="similarity">
    <text evidence="1">Belongs to the NAD-dependent DNA ligase family. LigB subfamily.</text>
</comment>
<comment type="sequence caution" evidence="2">
    <conflict type="erroneous initiation">
        <sequence resource="EMBL-CDS" id="ABF05891"/>
    </conflict>
</comment>
<dbReference type="EC" id="6.5.1.2" evidence="1"/>
<dbReference type="EMBL" id="CP000266">
    <property type="protein sequence ID" value="ABF05891.1"/>
    <property type="status" value="ALT_INIT"/>
    <property type="molecule type" value="Genomic_DNA"/>
</dbReference>
<dbReference type="RefSeq" id="WP_024260205.1">
    <property type="nucleotide sequence ID" value="NC_008258.1"/>
</dbReference>
<dbReference type="SMR" id="Q0SYH4"/>
<dbReference type="KEGG" id="sfv:SFV_3883"/>
<dbReference type="HOGENOM" id="CLU_489786_0_0_6"/>
<dbReference type="Proteomes" id="UP000000659">
    <property type="component" value="Chromosome"/>
</dbReference>
<dbReference type="GO" id="GO:0003911">
    <property type="term" value="F:DNA ligase (NAD+) activity"/>
    <property type="evidence" value="ECO:0007669"/>
    <property type="project" value="UniProtKB-UniRule"/>
</dbReference>
<dbReference type="GO" id="GO:0006281">
    <property type="term" value="P:DNA repair"/>
    <property type="evidence" value="ECO:0007669"/>
    <property type="project" value="UniProtKB-KW"/>
</dbReference>
<dbReference type="GO" id="GO:0006260">
    <property type="term" value="P:DNA replication"/>
    <property type="evidence" value="ECO:0007669"/>
    <property type="project" value="UniProtKB-KW"/>
</dbReference>
<dbReference type="FunFam" id="1.10.287.610:FF:000003">
    <property type="entry name" value="DNA ligase B"/>
    <property type="match status" value="1"/>
</dbReference>
<dbReference type="FunFam" id="2.40.50.140:FF:000139">
    <property type="entry name" value="DNA ligase B"/>
    <property type="match status" value="1"/>
</dbReference>
<dbReference type="FunFam" id="3.30.470.30:FF:000007">
    <property type="entry name" value="DNA ligase B"/>
    <property type="match status" value="1"/>
</dbReference>
<dbReference type="Gene3D" id="3.30.470.30">
    <property type="entry name" value="DNA ligase/mRNA capping enzyme"/>
    <property type="match status" value="1"/>
</dbReference>
<dbReference type="Gene3D" id="1.10.287.610">
    <property type="entry name" value="Helix hairpin bin"/>
    <property type="match status" value="1"/>
</dbReference>
<dbReference type="Gene3D" id="2.40.50.140">
    <property type="entry name" value="Nucleic acid-binding proteins"/>
    <property type="match status" value="1"/>
</dbReference>
<dbReference type="HAMAP" id="MF_01587">
    <property type="entry name" value="DNA_ligase_B"/>
    <property type="match status" value="1"/>
</dbReference>
<dbReference type="InterPro" id="IPR018239">
    <property type="entry name" value="DNA_ligase_AS"/>
</dbReference>
<dbReference type="InterPro" id="IPR020923">
    <property type="entry name" value="DNA_ligase_B"/>
</dbReference>
<dbReference type="InterPro" id="IPR033136">
    <property type="entry name" value="DNA_ligase_CS"/>
</dbReference>
<dbReference type="InterPro" id="IPR013839">
    <property type="entry name" value="DNAligase_adenylation"/>
</dbReference>
<dbReference type="InterPro" id="IPR013840">
    <property type="entry name" value="DNAligase_N"/>
</dbReference>
<dbReference type="InterPro" id="IPR012340">
    <property type="entry name" value="NA-bd_OB-fold"/>
</dbReference>
<dbReference type="InterPro" id="IPR050326">
    <property type="entry name" value="NAD_dep_DNA_ligaseB"/>
</dbReference>
<dbReference type="InterPro" id="IPR004150">
    <property type="entry name" value="NAD_DNA_ligase_OB"/>
</dbReference>
<dbReference type="InterPro" id="IPR010994">
    <property type="entry name" value="RuvA_2-like"/>
</dbReference>
<dbReference type="NCBIfam" id="NF005987">
    <property type="entry name" value="PRK08097.1"/>
    <property type="match status" value="1"/>
</dbReference>
<dbReference type="PANTHER" id="PTHR47810">
    <property type="entry name" value="DNA LIGASE"/>
    <property type="match status" value="1"/>
</dbReference>
<dbReference type="PANTHER" id="PTHR47810:SF1">
    <property type="entry name" value="DNA LIGASE B"/>
    <property type="match status" value="1"/>
</dbReference>
<dbReference type="Pfam" id="PF01653">
    <property type="entry name" value="DNA_ligase_aden"/>
    <property type="match status" value="1"/>
</dbReference>
<dbReference type="Pfam" id="PF03120">
    <property type="entry name" value="DNA_ligase_OB"/>
    <property type="match status" value="1"/>
</dbReference>
<dbReference type="SMART" id="SM00532">
    <property type="entry name" value="LIGANc"/>
    <property type="match status" value="1"/>
</dbReference>
<dbReference type="SUPFAM" id="SSF56091">
    <property type="entry name" value="DNA ligase/mRNA capping enzyme, catalytic domain"/>
    <property type="match status" value="1"/>
</dbReference>
<dbReference type="SUPFAM" id="SSF50249">
    <property type="entry name" value="Nucleic acid-binding proteins"/>
    <property type="match status" value="1"/>
</dbReference>
<dbReference type="SUPFAM" id="SSF47781">
    <property type="entry name" value="RuvA domain 2-like"/>
    <property type="match status" value="1"/>
</dbReference>
<dbReference type="PROSITE" id="PS01055">
    <property type="entry name" value="DNA_LIGASE_N1"/>
    <property type="match status" value="1"/>
</dbReference>
<dbReference type="PROSITE" id="PS01056">
    <property type="entry name" value="DNA_LIGASE_N2"/>
    <property type="match status" value="1"/>
</dbReference>
<gene>
    <name evidence="1" type="primary">ligB</name>
    <name type="ordered locus">SFV_3883</name>
</gene>
<organism>
    <name type="scientific">Shigella flexneri serotype 5b (strain 8401)</name>
    <dbReference type="NCBI Taxonomy" id="373384"/>
    <lineage>
        <taxon>Bacteria</taxon>
        <taxon>Pseudomonadati</taxon>
        <taxon>Pseudomonadota</taxon>
        <taxon>Gammaproteobacteria</taxon>
        <taxon>Enterobacterales</taxon>
        <taxon>Enterobacteriaceae</taxon>
        <taxon>Shigella</taxon>
    </lineage>
</organism>
<proteinExistence type="inferred from homology"/>
<feature type="chain" id="PRO_0000313555" description="DNA ligase B">
    <location>
        <begin position="1"/>
        <end position="560"/>
    </location>
</feature>
<feature type="active site" description="N6-AMP-lysine intermediate" evidence="1">
    <location>
        <position position="124"/>
    </location>
</feature>
<protein>
    <recommendedName>
        <fullName evidence="1">DNA ligase B</fullName>
        <ecNumber evidence="1">6.5.1.2</ecNumber>
    </recommendedName>
    <alternativeName>
        <fullName evidence="1">Polydeoxyribonucleotide synthase [NAD(+)] B</fullName>
    </alternativeName>
</protein>